<evidence type="ECO:0000269" key="1">
    <source>
    </source>
</evidence>
<evidence type="ECO:0000305" key="2"/>
<sequence>MLEAKMVMVVPTIEDQAMIVLHPKILSQSVVMHIKGQNYQLDLVKVKHIMIEVGHLDPQVRTGAMVLIKGITAYVKSIRKTVHNVHNYGFLKSHFKRAKTAAKPTLTKLHLTSATRLQKMKKSRIKDSRRMKQLETNFKRKIIEIHEIAVLPIEPMKIKGTTEIERAILRRFRKVPRVGITSVGTRGNY</sequence>
<dbReference type="EMBL" id="Z46843">
    <property type="status" value="NOT_ANNOTATED_CDS"/>
    <property type="molecule type" value="Genomic_DNA"/>
</dbReference>
<dbReference type="EMBL" id="Z71416">
    <property type="protein sequence ID" value="CAA96022.1"/>
    <property type="molecule type" value="Genomic_DNA"/>
</dbReference>
<dbReference type="EMBL" id="AY693303">
    <property type="protein sequence ID" value="AAT93322.1"/>
    <property type="molecule type" value="Genomic_DNA"/>
</dbReference>
<dbReference type="EMBL" id="BK006947">
    <property type="protein sequence ID" value="DAA35134.1"/>
    <property type="molecule type" value="Genomic_DNA"/>
</dbReference>
<dbReference type="PIR" id="S59264">
    <property type="entry name" value="S59264"/>
</dbReference>
<dbReference type="RefSeq" id="NP_001257689.1">
    <property type="nucleotide sequence ID" value="NM_001270760.1"/>
</dbReference>
<dbReference type="SMR" id="P53910"/>
<dbReference type="BioGRID" id="300856">
    <property type="interactions" value="254"/>
</dbReference>
<dbReference type="DIP" id="DIP-2137N"/>
<dbReference type="FunCoup" id="P53910">
    <property type="interactions" value="41"/>
</dbReference>
<dbReference type="MINT" id="P53910"/>
<dbReference type="STRING" id="4932.YNL140C"/>
<dbReference type="PaxDb" id="4932-YNL140C"/>
<dbReference type="EnsemblFungi" id="YNL140C_mRNA">
    <property type="protein sequence ID" value="YNL140C"/>
    <property type="gene ID" value="YNL140C"/>
</dbReference>
<dbReference type="GeneID" id="855582"/>
<dbReference type="KEGG" id="sce:YNL140C"/>
<dbReference type="AGR" id="SGD:S000005084"/>
<dbReference type="SGD" id="S000005084">
    <property type="gene designation" value="YNL140C"/>
</dbReference>
<dbReference type="VEuPathDB" id="FungiDB:YNL140C"/>
<dbReference type="HOGENOM" id="CLU_1435188_0_0_1"/>
<dbReference type="InParanoid" id="P53910"/>
<dbReference type="BioCyc" id="YEAST:G3O-33159-MONOMER"/>
<dbReference type="PRO" id="PR:P53910"/>
<dbReference type="Proteomes" id="UP000002311">
    <property type="component" value="Chromosome XIV"/>
</dbReference>
<dbReference type="RNAct" id="P53910">
    <property type="molecule type" value="protein"/>
</dbReference>
<name>YNO0_YEAST</name>
<gene>
    <name type="ordered locus">YNL140C</name>
    <name type="ORF">N1830</name>
</gene>
<organism>
    <name type="scientific">Saccharomyces cerevisiae (strain ATCC 204508 / S288c)</name>
    <name type="common">Baker's yeast</name>
    <dbReference type="NCBI Taxonomy" id="559292"/>
    <lineage>
        <taxon>Eukaryota</taxon>
        <taxon>Fungi</taxon>
        <taxon>Dikarya</taxon>
        <taxon>Ascomycota</taxon>
        <taxon>Saccharomycotina</taxon>
        <taxon>Saccharomycetes</taxon>
        <taxon>Saccharomycetales</taxon>
        <taxon>Saccharomycetaceae</taxon>
        <taxon>Saccharomyces</taxon>
    </lineage>
</organism>
<reference key="1">
    <citation type="journal article" date="1995" name="Yeast">
        <title>A 43.5 kb segment of yeast chromosome XIV, which contains MFA2, MEP2, CAP/SRV2, NAM9, FKB1/FPR1/RBP1, MOM22 and CPT1, predicts an adenosine deaminase gene and 14 new open reading frames.</title>
        <authorList>
            <person name="Mallet L."/>
            <person name="Bussereau F."/>
            <person name="Jacquet M."/>
        </authorList>
    </citation>
    <scope>NUCLEOTIDE SEQUENCE [GENOMIC DNA]</scope>
    <source>
        <strain>ATCC 204508 / S288c</strain>
    </source>
</reference>
<reference key="2">
    <citation type="journal article" date="1997" name="Nature">
        <title>The nucleotide sequence of Saccharomyces cerevisiae chromosome XIV and its evolutionary implications.</title>
        <authorList>
            <person name="Philippsen P."/>
            <person name="Kleine K."/>
            <person name="Poehlmann R."/>
            <person name="Duesterhoeft A."/>
            <person name="Hamberg K."/>
            <person name="Hegemann J.H."/>
            <person name="Obermaier B."/>
            <person name="Urrestarazu L.A."/>
            <person name="Aert R."/>
            <person name="Albermann K."/>
            <person name="Altmann R."/>
            <person name="Andre B."/>
            <person name="Baladron V."/>
            <person name="Ballesta J.P.G."/>
            <person name="Becam A.-M."/>
            <person name="Beinhauer J.D."/>
            <person name="Boskovic J."/>
            <person name="Buitrago M.J."/>
            <person name="Bussereau F."/>
            <person name="Coster F."/>
            <person name="Crouzet M."/>
            <person name="D'Angelo M."/>
            <person name="Dal Pero F."/>
            <person name="De Antoni A."/>
            <person name="del Rey F."/>
            <person name="Doignon F."/>
            <person name="Domdey H."/>
            <person name="Dubois E."/>
            <person name="Fiedler T.A."/>
            <person name="Fleig U."/>
            <person name="Floeth M."/>
            <person name="Fritz C."/>
            <person name="Gaillardin C."/>
            <person name="Garcia-Cantalejo J.M."/>
            <person name="Glansdorff N."/>
            <person name="Goffeau A."/>
            <person name="Gueldener U."/>
            <person name="Herbert C.J."/>
            <person name="Heumann K."/>
            <person name="Heuss-Neitzel D."/>
            <person name="Hilbert H."/>
            <person name="Hinni K."/>
            <person name="Iraqui Houssaini I."/>
            <person name="Jacquet M."/>
            <person name="Jimenez A."/>
            <person name="Jonniaux J.-L."/>
            <person name="Karpfinger-Hartl L."/>
            <person name="Lanfranchi G."/>
            <person name="Lepingle A."/>
            <person name="Levesque H."/>
            <person name="Lyck R."/>
            <person name="Maftahi M."/>
            <person name="Mallet L."/>
            <person name="Maurer C.T.C."/>
            <person name="Messenguy F."/>
            <person name="Mewes H.-W."/>
            <person name="Moestl D."/>
            <person name="Nasr F."/>
            <person name="Nicaud J.-M."/>
            <person name="Niedenthal R.K."/>
            <person name="Pandolfo D."/>
            <person name="Pierard A."/>
            <person name="Piravandi E."/>
            <person name="Planta R.J."/>
            <person name="Pohl T.M."/>
            <person name="Purnelle B."/>
            <person name="Rebischung C."/>
            <person name="Remacha M.A."/>
            <person name="Revuelta J.L."/>
            <person name="Rinke M."/>
            <person name="Saiz J.E."/>
            <person name="Sartorello F."/>
            <person name="Scherens B."/>
            <person name="Sen-Gupta M."/>
            <person name="Soler-Mira A."/>
            <person name="Urbanus J.H.M."/>
            <person name="Valle G."/>
            <person name="Van Dyck L."/>
            <person name="Verhasselt P."/>
            <person name="Vierendeels F."/>
            <person name="Vissers S."/>
            <person name="Voet M."/>
            <person name="Volckaert G."/>
            <person name="Wach A."/>
            <person name="Wambutt R."/>
            <person name="Wedler H."/>
            <person name="Zollner A."/>
            <person name="Hani J."/>
        </authorList>
    </citation>
    <scope>NUCLEOTIDE SEQUENCE [LARGE SCALE GENOMIC DNA]</scope>
    <source>
        <strain>ATCC 204508 / S288c</strain>
    </source>
</reference>
<reference key="3">
    <citation type="journal article" date="2014" name="G3 (Bethesda)">
        <title>The reference genome sequence of Saccharomyces cerevisiae: Then and now.</title>
        <authorList>
            <person name="Engel S.R."/>
            <person name="Dietrich F.S."/>
            <person name="Fisk D.G."/>
            <person name="Binkley G."/>
            <person name="Balakrishnan R."/>
            <person name="Costanzo M.C."/>
            <person name="Dwight S.S."/>
            <person name="Hitz B.C."/>
            <person name="Karra K."/>
            <person name="Nash R.S."/>
            <person name="Weng S."/>
            <person name="Wong E.D."/>
            <person name="Lloyd P."/>
            <person name="Skrzypek M.S."/>
            <person name="Miyasato S.R."/>
            <person name="Simison M."/>
            <person name="Cherry J.M."/>
        </authorList>
    </citation>
    <scope>GENOME REANNOTATION</scope>
    <source>
        <strain>ATCC 204508 / S288c</strain>
    </source>
</reference>
<reference key="4">
    <citation type="journal article" date="2007" name="Genome Res.">
        <title>Approaching a complete repository of sequence-verified protein-encoding clones for Saccharomyces cerevisiae.</title>
        <authorList>
            <person name="Hu Y."/>
            <person name="Rolfs A."/>
            <person name="Bhullar B."/>
            <person name="Murthy T.V.S."/>
            <person name="Zhu C."/>
            <person name="Berger M.F."/>
            <person name="Camargo A.A."/>
            <person name="Kelley F."/>
            <person name="McCarron S."/>
            <person name="Jepson D."/>
            <person name="Richardson A."/>
            <person name="Raphael J."/>
            <person name="Moreira D."/>
            <person name="Taycher E."/>
            <person name="Zuo D."/>
            <person name="Mohr S."/>
            <person name="Kane M.F."/>
            <person name="Williamson J."/>
            <person name="Simpson A.J.G."/>
            <person name="Bulyk M.L."/>
            <person name="Harlow E."/>
            <person name="Marsischky G."/>
            <person name="Kolodner R.D."/>
            <person name="LaBaer J."/>
        </authorList>
    </citation>
    <scope>NUCLEOTIDE SEQUENCE [GENOMIC DNA]</scope>
    <source>
        <strain>ATCC 204508 / S288c</strain>
    </source>
</reference>
<reference key="5">
    <citation type="journal article" date="2003" name="Nature">
        <title>Global analysis of protein expression in yeast.</title>
        <authorList>
            <person name="Ghaemmaghami S."/>
            <person name="Huh W.-K."/>
            <person name="Bower K."/>
            <person name="Howson R.W."/>
            <person name="Belle A."/>
            <person name="Dephoure N."/>
            <person name="O'Shea E.K."/>
            <person name="Weissman J.S."/>
        </authorList>
    </citation>
    <scope>LEVEL OF PROTEIN EXPRESSION [LARGE SCALE ANALYSIS]</scope>
</reference>
<protein>
    <recommendedName>
        <fullName>Uncharacterized protein YNL140C</fullName>
    </recommendedName>
</protein>
<comment type="miscellaneous">
    <text evidence="1">Present with 1590 molecules/cell in log phase SD medium.</text>
</comment>
<keyword id="KW-1185">Reference proteome</keyword>
<accession>P53910</accession>
<accession>I2HB73</accession>
<accession>Q6B0X7</accession>
<proteinExistence type="evidence at protein level"/>
<feature type="chain" id="PRO_0000203425" description="Uncharacterized protein YNL140C">
    <location>
        <begin position="1"/>
        <end position="189"/>
    </location>
</feature>
<feature type="sequence conflict" description="In Ref. 4; AAT93322." evidence="2" ref="4">
    <original>M</original>
    <variation>T</variation>
    <location>
        <position position="18"/>
    </location>
</feature>